<dbReference type="EMBL" id="AE017220">
    <property type="protein sequence ID" value="AAX66037.1"/>
    <property type="molecule type" value="Genomic_DNA"/>
</dbReference>
<dbReference type="RefSeq" id="WP_001540390.1">
    <property type="nucleotide sequence ID" value="NC_006905.1"/>
</dbReference>
<dbReference type="SMR" id="Q57MM4"/>
<dbReference type="KEGG" id="sec:SCH_2131"/>
<dbReference type="HOGENOM" id="CLU_002755_1_2_6"/>
<dbReference type="Proteomes" id="UP000000538">
    <property type="component" value="Chromosome"/>
</dbReference>
<dbReference type="GO" id="GO:0005886">
    <property type="term" value="C:plasma membrane"/>
    <property type="evidence" value="ECO:0007669"/>
    <property type="project" value="UniProtKB-SubCell"/>
</dbReference>
<dbReference type="GO" id="GO:0042910">
    <property type="term" value="F:xenobiotic transmembrane transporter activity"/>
    <property type="evidence" value="ECO:0007669"/>
    <property type="project" value="TreeGrafter"/>
</dbReference>
<dbReference type="FunFam" id="1.20.1640.10:FF:000001">
    <property type="entry name" value="Efflux pump membrane transporter"/>
    <property type="match status" value="1"/>
</dbReference>
<dbReference type="FunFam" id="3.30.70.1430:FF:000001">
    <property type="entry name" value="Efflux pump membrane transporter"/>
    <property type="match status" value="1"/>
</dbReference>
<dbReference type="FunFam" id="3.30.2090.10:FF:000004">
    <property type="entry name" value="Multidrug resistance protein MdtC"/>
    <property type="match status" value="1"/>
</dbReference>
<dbReference type="FunFam" id="3.30.2090.10:FF:000005">
    <property type="entry name" value="Multidrug resistance protein MdtC"/>
    <property type="match status" value="1"/>
</dbReference>
<dbReference type="FunFam" id="3.30.70.1430:FF:000004">
    <property type="entry name" value="Multidrug resistance protein MdtC"/>
    <property type="match status" value="1"/>
</dbReference>
<dbReference type="Gene3D" id="3.30.70.1430">
    <property type="entry name" value="Multidrug efflux transporter AcrB pore domain"/>
    <property type="match status" value="2"/>
</dbReference>
<dbReference type="Gene3D" id="3.30.70.1440">
    <property type="entry name" value="Multidrug efflux transporter AcrB pore domain"/>
    <property type="match status" value="1"/>
</dbReference>
<dbReference type="Gene3D" id="3.30.70.1320">
    <property type="entry name" value="Multidrug efflux transporter AcrB pore domain like"/>
    <property type="match status" value="1"/>
</dbReference>
<dbReference type="Gene3D" id="3.30.2090.10">
    <property type="entry name" value="Multidrug efflux transporter AcrB TolC docking domain, DN and DC subdomains"/>
    <property type="match status" value="2"/>
</dbReference>
<dbReference type="Gene3D" id="1.20.1640.10">
    <property type="entry name" value="Multidrug efflux transporter AcrB transmembrane domain"/>
    <property type="match status" value="2"/>
</dbReference>
<dbReference type="HAMAP" id="MF_01424">
    <property type="entry name" value="MdtC"/>
    <property type="match status" value="1"/>
</dbReference>
<dbReference type="InterPro" id="IPR027463">
    <property type="entry name" value="AcrB_DN_DC_subdom"/>
</dbReference>
<dbReference type="InterPro" id="IPR001036">
    <property type="entry name" value="Acrflvin-R"/>
</dbReference>
<dbReference type="InterPro" id="IPR023931">
    <property type="entry name" value="Multidrug-R_MdtC"/>
</dbReference>
<dbReference type="NCBIfam" id="NF007905">
    <property type="entry name" value="PRK10614.1"/>
    <property type="match status" value="1"/>
</dbReference>
<dbReference type="NCBIfam" id="NF033617">
    <property type="entry name" value="RND_permease_2"/>
    <property type="match status" value="1"/>
</dbReference>
<dbReference type="PANTHER" id="PTHR32063">
    <property type="match status" value="1"/>
</dbReference>
<dbReference type="PANTHER" id="PTHR32063:SF34">
    <property type="entry name" value="MULTIDRUG RESISTANCE PROTEIN MDTC"/>
    <property type="match status" value="1"/>
</dbReference>
<dbReference type="Pfam" id="PF00873">
    <property type="entry name" value="ACR_tran"/>
    <property type="match status" value="1"/>
</dbReference>
<dbReference type="PRINTS" id="PR00702">
    <property type="entry name" value="ACRIFLAVINRP"/>
</dbReference>
<dbReference type="SUPFAM" id="SSF82693">
    <property type="entry name" value="Multidrug efflux transporter AcrB pore domain, PN1, PN2, PC1 and PC2 subdomains"/>
    <property type="match status" value="4"/>
</dbReference>
<dbReference type="SUPFAM" id="SSF82714">
    <property type="entry name" value="Multidrug efflux transporter AcrB TolC docking domain, DN and DC subdomains"/>
    <property type="match status" value="2"/>
</dbReference>
<dbReference type="SUPFAM" id="SSF82866">
    <property type="entry name" value="Multidrug efflux transporter AcrB transmembrane domain"/>
    <property type="match status" value="2"/>
</dbReference>
<gene>
    <name evidence="1" type="primary">mdtC</name>
    <name type="ordered locus">SCH_2131</name>
</gene>
<protein>
    <recommendedName>
        <fullName evidence="1">Multidrug resistance protein MdtC</fullName>
    </recommendedName>
    <alternativeName>
        <fullName evidence="1">Multidrug transporter MdtC</fullName>
    </alternativeName>
</protein>
<sequence length="1026" mass="110935">MRFFALFIYRPVATILIAAAITLCGILGFRLLPVAPLPQVDFPVIMVSASLPGASPETMASSVATPLERSLGRIAGVNEMTSSSSLGSTRIILEFNFDRDINGAARDVQAAINAAQSLLPGGMPSRPTYRKANPSDAPIMILTLTSESWSQGKLYDFASTQLAQTIAQIDGVGDVDVGGSSLPAVRVGLNPQALFNQGVSLDEVREAIDSANVRRPQGAIEDSVHRWQIQTNDELKTAAEYQPLIIHYNNGAAVRLGDVASVTDSVQDVRNAGMTNAKPAILLMIRKLPEANIIQTVDGIRAKLPELRAMIPAAIDLQIAQDRSPTIRASLQEVEETLAISVALVIMVVFLFLRSGRATLIPAVAVPVSLIGTFAAMYLCGFSLNNLSLMALTIATGFVVDDAIVVLENIARHLEAGMKPLQAALQGTREVGFTVISMSLSLVAVFLPLLLMGGLPGRLLREFAVTLSVAIGISLVVSLTLTPMMCGWMLKSSKPRTQPRKRGVGRLLVALQQGYGTSLKWVLNHTRLVGVVFLGTVALNIWLYIAIPKTFFPEQDTGVLMGGIQADQSISFQAMRGKLQDFMKIIRDDPAVNNVTGFTGGSRVNSGMMFITLKPRGERKETAQQIIDRLRVKLAKEPGARLFLMAVQDIRVGGRQANASYQYTLLSDSLAALREWEPKIRKALSALPQLADVNSDQQDNGAEMNLIYDRDTMSRLGIDVQAANSLLNNAFGQRQISTIYQPMNQYKVVMEVDPRYSQDISALEKMFVINRDGKAIPLSYFAQWRPANAPLSVNHQGLSAASTIAFNLPTGTSLSQATEAINRTMTQLGVPPTVRGSFSGTAQVFQQTMNSQLILIVAAIATVYIVLGILYESYVHPLTILSTLPSAGVGALLALELFNAPFSLIALIGIMLLIGIVKKNAIMMVDFALEAQRSGGLTPAQAIFQACLLRFRPIMMTTLAALFGALPLVLSGGDGSELRQPLGITIVGGLVMSQLLTLYTTPVVYLFFDRLRLRFSRKNSKPVVEI</sequence>
<feature type="chain" id="PRO_1000024315" description="Multidrug resistance protein MdtC">
    <location>
        <begin position="1"/>
        <end position="1026"/>
    </location>
</feature>
<feature type="transmembrane region" description="Helical" evidence="1">
    <location>
        <begin position="15"/>
        <end position="35"/>
    </location>
</feature>
<feature type="transmembrane region" description="Helical" evidence="1">
    <location>
        <begin position="333"/>
        <end position="353"/>
    </location>
</feature>
<feature type="transmembrane region" description="Helical" evidence="1">
    <location>
        <begin position="360"/>
        <end position="380"/>
    </location>
</feature>
<feature type="transmembrane region" description="Helical" evidence="1">
    <location>
        <begin position="387"/>
        <end position="407"/>
    </location>
</feature>
<feature type="transmembrane region" description="Helical" evidence="1">
    <location>
        <begin position="431"/>
        <end position="451"/>
    </location>
</feature>
<feature type="transmembrane region" description="Helical" evidence="1">
    <location>
        <begin position="463"/>
        <end position="483"/>
    </location>
</feature>
<feature type="transmembrane region" description="Helical" evidence="1">
    <location>
        <begin position="528"/>
        <end position="548"/>
    </location>
</feature>
<feature type="transmembrane region" description="Helical" evidence="1">
    <location>
        <begin position="853"/>
        <end position="873"/>
    </location>
</feature>
<feature type="transmembrane region" description="Helical" evidence="1">
    <location>
        <begin position="897"/>
        <end position="917"/>
    </location>
</feature>
<feature type="transmembrane region" description="Helical" evidence="1">
    <location>
        <begin position="953"/>
        <end position="973"/>
    </location>
</feature>
<feature type="transmembrane region" description="Helical" evidence="1">
    <location>
        <begin position="984"/>
        <end position="1004"/>
    </location>
</feature>
<reference key="1">
    <citation type="journal article" date="2005" name="Nucleic Acids Res.">
        <title>The genome sequence of Salmonella enterica serovar Choleraesuis, a highly invasive and resistant zoonotic pathogen.</title>
        <authorList>
            <person name="Chiu C.-H."/>
            <person name="Tang P."/>
            <person name="Chu C."/>
            <person name="Hu S."/>
            <person name="Bao Q."/>
            <person name="Yu J."/>
            <person name="Chou Y.-Y."/>
            <person name="Wang H.-S."/>
            <person name="Lee Y.-S."/>
        </authorList>
    </citation>
    <scope>NUCLEOTIDE SEQUENCE [LARGE SCALE GENOMIC DNA]</scope>
    <source>
        <strain>SC-B67</strain>
    </source>
</reference>
<name>MDTC_SALCH</name>
<evidence type="ECO:0000255" key="1">
    <source>
        <dbReference type="HAMAP-Rule" id="MF_01424"/>
    </source>
</evidence>
<organism>
    <name type="scientific">Salmonella choleraesuis (strain SC-B67)</name>
    <dbReference type="NCBI Taxonomy" id="321314"/>
    <lineage>
        <taxon>Bacteria</taxon>
        <taxon>Pseudomonadati</taxon>
        <taxon>Pseudomonadota</taxon>
        <taxon>Gammaproteobacteria</taxon>
        <taxon>Enterobacterales</taxon>
        <taxon>Enterobacteriaceae</taxon>
        <taxon>Salmonella</taxon>
    </lineage>
</organism>
<keyword id="KW-0997">Cell inner membrane</keyword>
<keyword id="KW-1003">Cell membrane</keyword>
<keyword id="KW-0472">Membrane</keyword>
<keyword id="KW-0812">Transmembrane</keyword>
<keyword id="KW-1133">Transmembrane helix</keyword>
<keyword id="KW-0813">Transport</keyword>
<accession>Q57MM4</accession>
<comment type="subunit">
    <text evidence="1">Part of a tripartite efflux system composed of MdtA, MdtB and MdtC. MdtC forms a heteromultimer with MdtB.</text>
</comment>
<comment type="subcellular location">
    <subcellularLocation>
        <location evidence="1">Cell inner membrane</location>
        <topology evidence="1">Multi-pass membrane protein</topology>
    </subcellularLocation>
</comment>
<comment type="similarity">
    <text evidence="1">Belongs to the resistance-nodulation-cell division (RND) (TC 2.A.6) family. MdtC subfamily.</text>
</comment>
<proteinExistence type="inferred from homology"/>